<evidence type="ECO:0000255" key="1">
    <source>
        <dbReference type="HAMAP-Rule" id="MF_01718"/>
    </source>
</evidence>
<comment type="function">
    <text evidence="1">Part of the ABC transporter complex HmuTUV involved in hemin import. Responsible for energy coupling to the transport system.</text>
</comment>
<comment type="subunit">
    <text evidence="1">The complex is composed of two ATP-binding proteins (HmuV), two transmembrane proteins (HmuU) and a solute-binding protein (HmuT).</text>
</comment>
<comment type="subcellular location">
    <subcellularLocation>
        <location evidence="1">Cell membrane</location>
        <topology evidence="1">Peripheral membrane protein</topology>
    </subcellularLocation>
</comment>
<comment type="similarity">
    <text evidence="1">Belongs to the ABC transporter superfamily. Heme (hemin) importer (TC 3.A.1.14.5) family.</text>
</comment>
<reference key="1">
    <citation type="journal article" date="2006" name="Proc. Natl. Acad. Sci. U.S.A.">
        <title>The complete genome of Rhodococcus sp. RHA1 provides insights into a catabolic powerhouse.</title>
        <authorList>
            <person name="McLeod M.P."/>
            <person name="Warren R.L."/>
            <person name="Hsiao W.W.L."/>
            <person name="Araki N."/>
            <person name="Myhre M."/>
            <person name="Fernandes C."/>
            <person name="Miyazawa D."/>
            <person name="Wong W."/>
            <person name="Lillquist A.L."/>
            <person name="Wang D."/>
            <person name="Dosanjh M."/>
            <person name="Hara H."/>
            <person name="Petrescu A."/>
            <person name="Morin R.D."/>
            <person name="Yang G."/>
            <person name="Stott J.M."/>
            <person name="Schein J.E."/>
            <person name="Shin H."/>
            <person name="Smailus D."/>
            <person name="Siddiqui A.S."/>
            <person name="Marra M.A."/>
            <person name="Jones S.J.M."/>
            <person name="Holt R."/>
            <person name="Brinkman F.S.L."/>
            <person name="Miyauchi K."/>
            <person name="Fukuda M."/>
            <person name="Davies J.E."/>
            <person name="Mohn W.W."/>
            <person name="Eltis L.D."/>
        </authorList>
    </citation>
    <scope>NUCLEOTIDE SEQUENCE [LARGE SCALE GENOMIC DNA]</scope>
    <source>
        <strain>RHA1</strain>
    </source>
</reference>
<organism>
    <name type="scientific">Rhodococcus jostii (strain RHA1)</name>
    <dbReference type="NCBI Taxonomy" id="101510"/>
    <lineage>
        <taxon>Bacteria</taxon>
        <taxon>Bacillati</taxon>
        <taxon>Actinomycetota</taxon>
        <taxon>Actinomycetes</taxon>
        <taxon>Mycobacteriales</taxon>
        <taxon>Nocardiaceae</taxon>
        <taxon>Rhodococcus</taxon>
    </lineage>
</organism>
<dbReference type="EC" id="7.6.2.-" evidence="1"/>
<dbReference type="EMBL" id="CP000431">
    <property type="protein sequence ID" value="ABG92719.1"/>
    <property type="molecule type" value="Genomic_DNA"/>
</dbReference>
<dbReference type="RefSeq" id="WP_011594104.1">
    <property type="nucleotide sequence ID" value="NC_008268.1"/>
</dbReference>
<dbReference type="SMR" id="Q0SIB7"/>
<dbReference type="KEGG" id="rha:RHA1_ro00886"/>
<dbReference type="PATRIC" id="fig|101510.16.peg.907"/>
<dbReference type="eggNOG" id="COG4559">
    <property type="taxonomic scope" value="Bacteria"/>
</dbReference>
<dbReference type="HOGENOM" id="CLU_000604_1_11_11"/>
<dbReference type="OrthoDB" id="3579586at2"/>
<dbReference type="Proteomes" id="UP000008710">
    <property type="component" value="Chromosome"/>
</dbReference>
<dbReference type="GO" id="GO:0005886">
    <property type="term" value="C:plasma membrane"/>
    <property type="evidence" value="ECO:0007669"/>
    <property type="project" value="UniProtKB-SubCell"/>
</dbReference>
<dbReference type="GO" id="GO:0005524">
    <property type="term" value="F:ATP binding"/>
    <property type="evidence" value="ECO:0007669"/>
    <property type="project" value="UniProtKB-KW"/>
</dbReference>
<dbReference type="GO" id="GO:0016887">
    <property type="term" value="F:ATP hydrolysis activity"/>
    <property type="evidence" value="ECO:0007669"/>
    <property type="project" value="InterPro"/>
</dbReference>
<dbReference type="CDD" id="cd03214">
    <property type="entry name" value="ABC_Iron-Siderophores_B12_Hemin"/>
    <property type="match status" value="1"/>
</dbReference>
<dbReference type="FunFam" id="3.40.50.300:FF:000134">
    <property type="entry name" value="Iron-enterobactin ABC transporter ATP-binding protein"/>
    <property type="match status" value="1"/>
</dbReference>
<dbReference type="Gene3D" id="3.40.50.300">
    <property type="entry name" value="P-loop containing nucleotide triphosphate hydrolases"/>
    <property type="match status" value="1"/>
</dbReference>
<dbReference type="InterPro" id="IPR003593">
    <property type="entry name" value="AAA+_ATPase"/>
</dbReference>
<dbReference type="InterPro" id="IPR003439">
    <property type="entry name" value="ABC_transporter-like_ATP-bd"/>
</dbReference>
<dbReference type="InterPro" id="IPR017871">
    <property type="entry name" value="ABC_transporter-like_CS"/>
</dbReference>
<dbReference type="InterPro" id="IPR027417">
    <property type="entry name" value="P-loop_NTPase"/>
</dbReference>
<dbReference type="NCBIfam" id="NF010068">
    <property type="entry name" value="PRK13548.1"/>
    <property type="match status" value="1"/>
</dbReference>
<dbReference type="PANTHER" id="PTHR42794">
    <property type="entry name" value="HEMIN IMPORT ATP-BINDING PROTEIN HMUV"/>
    <property type="match status" value="1"/>
</dbReference>
<dbReference type="PANTHER" id="PTHR42794:SF1">
    <property type="entry name" value="HEMIN IMPORT ATP-BINDING PROTEIN HMUV"/>
    <property type="match status" value="1"/>
</dbReference>
<dbReference type="Pfam" id="PF00005">
    <property type="entry name" value="ABC_tran"/>
    <property type="match status" value="1"/>
</dbReference>
<dbReference type="SMART" id="SM00382">
    <property type="entry name" value="AAA"/>
    <property type="match status" value="1"/>
</dbReference>
<dbReference type="SUPFAM" id="SSF52540">
    <property type="entry name" value="P-loop containing nucleoside triphosphate hydrolases"/>
    <property type="match status" value="1"/>
</dbReference>
<dbReference type="PROSITE" id="PS00211">
    <property type="entry name" value="ABC_TRANSPORTER_1"/>
    <property type="match status" value="1"/>
</dbReference>
<dbReference type="PROSITE" id="PS50893">
    <property type="entry name" value="ABC_TRANSPORTER_2"/>
    <property type="match status" value="1"/>
</dbReference>
<dbReference type="PROSITE" id="PS51261">
    <property type="entry name" value="HMUV"/>
    <property type="match status" value="1"/>
</dbReference>
<gene>
    <name evidence="1" type="primary">hmuV</name>
    <name type="ordered locus">RHA1_ro00886</name>
</gene>
<proteinExistence type="inferred from homology"/>
<feature type="chain" id="PRO_0000269623" description="Hemin import ATP-binding protein HmuV">
    <location>
        <begin position="1"/>
        <end position="292"/>
    </location>
</feature>
<feature type="domain" description="ABC transporter" evidence="1">
    <location>
        <begin position="38"/>
        <end position="271"/>
    </location>
</feature>
<feature type="binding site" evidence="1">
    <location>
        <begin position="70"/>
        <end position="77"/>
    </location>
    <ligand>
        <name>ATP</name>
        <dbReference type="ChEBI" id="CHEBI:30616"/>
    </ligand>
</feature>
<name>HMUV_RHOJR</name>
<accession>Q0SIB7</accession>
<sequence length="292" mass="31376">MSPAFHPLRTRVGEAIEQSLFRRTDPVPPPRPSGAVTLRADGIAVTRGGRPVLDDVSVDVRIGEVLVLVGPNGAGKSTLLAALSGDQDVHTGTVHLDDRDLGEWTALEMAQRRAVLPQQNTVGFSFTARQVITMGRSPWARTPRSDDDAVAIAEAMRICDVVAFADRPFTALSGGERARVALARVLAQRTETILLDEPTAALDLGHQETVMRLARSRAEQGTAVVVVLHDLALAAAYADRIVVLEQGRVAANGPPADVLSEELLTRVYGHPVEVIEHPVTGATLVLPRRDQR</sequence>
<protein>
    <recommendedName>
        <fullName evidence="1">Hemin import ATP-binding protein HmuV</fullName>
        <ecNumber evidence="1">7.6.2.-</ecNumber>
    </recommendedName>
</protein>
<keyword id="KW-0067">ATP-binding</keyword>
<keyword id="KW-1003">Cell membrane</keyword>
<keyword id="KW-0472">Membrane</keyword>
<keyword id="KW-0547">Nucleotide-binding</keyword>
<keyword id="KW-1278">Translocase</keyword>
<keyword id="KW-0813">Transport</keyword>